<name>PYRD_SALAI</name>
<protein>
    <recommendedName>
        <fullName evidence="1">Dihydroorotate dehydrogenase (quinone)</fullName>
        <ecNumber evidence="1">1.3.5.2</ecNumber>
    </recommendedName>
    <alternativeName>
        <fullName evidence="1">DHOdehase</fullName>
        <shortName evidence="1">DHOD</shortName>
        <shortName evidence="1">DHODase</shortName>
    </alternativeName>
    <alternativeName>
        <fullName evidence="1">Dihydroorotate oxidase</fullName>
    </alternativeName>
</protein>
<organism>
    <name type="scientific">Salinispora arenicola (strain CNS-205)</name>
    <dbReference type="NCBI Taxonomy" id="391037"/>
    <lineage>
        <taxon>Bacteria</taxon>
        <taxon>Bacillati</taxon>
        <taxon>Actinomycetota</taxon>
        <taxon>Actinomycetes</taxon>
        <taxon>Micromonosporales</taxon>
        <taxon>Micromonosporaceae</taxon>
        <taxon>Salinispora</taxon>
    </lineage>
</organism>
<accession>A8LY18</accession>
<evidence type="ECO:0000255" key="1">
    <source>
        <dbReference type="HAMAP-Rule" id="MF_00225"/>
    </source>
</evidence>
<reference key="1">
    <citation type="submission" date="2007-10" db="EMBL/GenBank/DDBJ databases">
        <title>Complete sequence of Salinispora arenicola CNS-205.</title>
        <authorList>
            <consortium name="US DOE Joint Genome Institute"/>
            <person name="Copeland A."/>
            <person name="Lucas S."/>
            <person name="Lapidus A."/>
            <person name="Barry K."/>
            <person name="Glavina del Rio T."/>
            <person name="Dalin E."/>
            <person name="Tice H."/>
            <person name="Pitluck S."/>
            <person name="Foster B."/>
            <person name="Schmutz J."/>
            <person name="Larimer F."/>
            <person name="Land M."/>
            <person name="Hauser L."/>
            <person name="Kyrpides N."/>
            <person name="Ivanova N."/>
            <person name="Jensen P.R."/>
            <person name="Moore B.S."/>
            <person name="Penn K."/>
            <person name="Jenkins C."/>
            <person name="Udwary D."/>
            <person name="Xiang L."/>
            <person name="Gontang E."/>
            <person name="Richardson P."/>
        </authorList>
    </citation>
    <scope>NUCLEOTIDE SEQUENCE [LARGE SCALE GENOMIC DNA]</scope>
    <source>
        <strain>CNS-205</strain>
    </source>
</reference>
<comment type="function">
    <text evidence="1">Catalyzes the conversion of dihydroorotate to orotate with quinone as electron acceptor.</text>
</comment>
<comment type="catalytic activity">
    <reaction evidence="1">
        <text>(S)-dihydroorotate + a quinone = orotate + a quinol</text>
        <dbReference type="Rhea" id="RHEA:30187"/>
        <dbReference type="ChEBI" id="CHEBI:24646"/>
        <dbReference type="ChEBI" id="CHEBI:30839"/>
        <dbReference type="ChEBI" id="CHEBI:30864"/>
        <dbReference type="ChEBI" id="CHEBI:132124"/>
        <dbReference type="EC" id="1.3.5.2"/>
    </reaction>
</comment>
<comment type="cofactor">
    <cofactor evidence="1">
        <name>FMN</name>
        <dbReference type="ChEBI" id="CHEBI:58210"/>
    </cofactor>
    <text evidence="1">Binds 1 FMN per subunit.</text>
</comment>
<comment type="pathway">
    <text evidence="1">Pyrimidine metabolism; UMP biosynthesis via de novo pathway; orotate from (S)-dihydroorotate (quinone route): step 1/1.</text>
</comment>
<comment type="subunit">
    <text evidence="1">Monomer.</text>
</comment>
<comment type="subcellular location">
    <subcellularLocation>
        <location evidence="1">Cell membrane</location>
        <topology evidence="1">Peripheral membrane protein</topology>
    </subcellularLocation>
</comment>
<comment type="similarity">
    <text evidence="1">Belongs to the dihydroorotate dehydrogenase family. Type 2 subfamily.</text>
</comment>
<keyword id="KW-1003">Cell membrane</keyword>
<keyword id="KW-0285">Flavoprotein</keyword>
<keyword id="KW-0288">FMN</keyword>
<keyword id="KW-0472">Membrane</keyword>
<keyword id="KW-0560">Oxidoreductase</keyword>
<keyword id="KW-0665">Pyrimidine biosynthesis</keyword>
<gene>
    <name evidence="1" type="primary">pyrD</name>
    <name type="ordered locus">Sare_1850</name>
</gene>
<dbReference type="EC" id="1.3.5.2" evidence="1"/>
<dbReference type="EMBL" id="CP000850">
    <property type="protein sequence ID" value="ABV97735.1"/>
    <property type="molecule type" value="Genomic_DNA"/>
</dbReference>
<dbReference type="SMR" id="A8LY18"/>
<dbReference type="STRING" id="391037.Sare_1850"/>
<dbReference type="KEGG" id="saq:Sare_1850"/>
<dbReference type="PATRIC" id="fig|391037.6.peg.1878"/>
<dbReference type="eggNOG" id="COG0167">
    <property type="taxonomic scope" value="Bacteria"/>
</dbReference>
<dbReference type="HOGENOM" id="CLU_013640_2_0_11"/>
<dbReference type="OrthoDB" id="9802377at2"/>
<dbReference type="UniPathway" id="UPA00070">
    <property type="reaction ID" value="UER00946"/>
</dbReference>
<dbReference type="GO" id="GO:0005737">
    <property type="term" value="C:cytoplasm"/>
    <property type="evidence" value="ECO:0007669"/>
    <property type="project" value="InterPro"/>
</dbReference>
<dbReference type="GO" id="GO:0005886">
    <property type="term" value="C:plasma membrane"/>
    <property type="evidence" value="ECO:0007669"/>
    <property type="project" value="UniProtKB-SubCell"/>
</dbReference>
<dbReference type="GO" id="GO:0106430">
    <property type="term" value="F:dihydroorotate dehydrogenase (quinone) activity"/>
    <property type="evidence" value="ECO:0007669"/>
    <property type="project" value="UniProtKB-EC"/>
</dbReference>
<dbReference type="GO" id="GO:0006207">
    <property type="term" value="P:'de novo' pyrimidine nucleobase biosynthetic process"/>
    <property type="evidence" value="ECO:0007669"/>
    <property type="project" value="InterPro"/>
</dbReference>
<dbReference type="GO" id="GO:0044205">
    <property type="term" value="P:'de novo' UMP biosynthetic process"/>
    <property type="evidence" value="ECO:0007669"/>
    <property type="project" value="UniProtKB-UniRule"/>
</dbReference>
<dbReference type="CDD" id="cd04738">
    <property type="entry name" value="DHOD_2_like"/>
    <property type="match status" value="1"/>
</dbReference>
<dbReference type="Gene3D" id="3.20.20.70">
    <property type="entry name" value="Aldolase class I"/>
    <property type="match status" value="1"/>
</dbReference>
<dbReference type="HAMAP" id="MF_00225">
    <property type="entry name" value="DHO_dh_type2"/>
    <property type="match status" value="1"/>
</dbReference>
<dbReference type="InterPro" id="IPR013785">
    <property type="entry name" value="Aldolase_TIM"/>
</dbReference>
<dbReference type="InterPro" id="IPR050074">
    <property type="entry name" value="DHO_dehydrogenase"/>
</dbReference>
<dbReference type="InterPro" id="IPR012135">
    <property type="entry name" value="Dihydroorotate_DH_1_2"/>
</dbReference>
<dbReference type="InterPro" id="IPR005719">
    <property type="entry name" value="Dihydroorotate_DH_2"/>
</dbReference>
<dbReference type="InterPro" id="IPR005720">
    <property type="entry name" value="Dihydroorotate_DH_cat"/>
</dbReference>
<dbReference type="InterPro" id="IPR001295">
    <property type="entry name" value="Dihydroorotate_DH_CS"/>
</dbReference>
<dbReference type="NCBIfam" id="NF003652">
    <property type="entry name" value="PRK05286.2-5"/>
    <property type="match status" value="1"/>
</dbReference>
<dbReference type="NCBIfam" id="TIGR01036">
    <property type="entry name" value="pyrD_sub2"/>
    <property type="match status" value="1"/>
</dbReference>
<dbReference type="PANTHER" id="PTHR48109:SF4">
    <property type="entry name" value="DIHYDROOROTATE DEHYDROGENASE (QUINONE), MITOCHONDRIAL"/>
    <property type="match status" value="1"/>
</dbReference>
<dbReference type="PANTHER" id="PTHR48109">
    <property type="entry name" value="DIHYDROOROTATE DEHYDROGENASE (QUINONE), MITOCHONDRIAL-RELATED"/>
    <property type="match status" value="1"/>
</dbReference>
<dbReference type="Pfam" id="PF01180">
    <property type="entry name" value="DHO_dh"/>
    <property type="match status" value="1"/>
</dbReference>
<dbReference type="PIRSF" id="PIRSF000164">
    <property type="entry name" value="DHO_oxidase"/>
    <property type="match status" value="1"/>
</dbReference>
<dbReference type="SUPFAM" id="SSF51395">
    <property type="entry name" value="FMN-linked oxidoreductases"/>
    <property type="match status" value="1"/>
</dbReference>
<dbReference type="PROSITE" id="PS00911">
    <property type="entry name" value="DHODEHASE_1"/>
    <property type="match status" value="1"/>
</dbReference>
<dbReference type="PROSITE" id="PS00912">
    <property type="entry name" value="DHODEHASE_2"/>
    <property type="match status" value="1"/>
</dbReference>
<proteinExistence type="inferred from homology"/>
<feature type="chain" id="PRO_0000336490" description="Dihydroorotate dehydrogenase (quinone)">
    <location>
        <begin position="1"/>
        <end position="338"/>
    </location>
</feature>
<feature type="active site" description="Nucleophile" evidence="1">
    <location>
        <position position="183"/>
    </location>
</feature>
<feature type="binding site" evidence="1">
    <location>
        <begin position="68"/>
        <end position="72"/>
    </location>
    <ligand>
        <name>FMN</name>
        <dbReference type="ChEBI" id="CHEBI:58210"/>
    </ligand>
</feature>
<feature type="binding site" evidence="1">
    <location>
        <position position="72"/>
    </location>
    <ligand>
        <name>substrate</name>
    </ligand>
</feature>
<feature type="binding site" evidence="1">
    <location>
        <position position="92"/>
    </location>
    <ligand>
        <name>FMN</name>
        <dbReference type="ChEBI" id="CHEBI:58210"/>
    </ligand>
</feature>
<feature type="binding site" evidence="1">
    <location>
        <begin position="117"/>
        <end position="121"/>
    </location>
    <ligand>
        <name>substrate</name>
    </ligand>
</feature>
<feature type="binding site" evidence="1">
    <location>
        <position position="147"/>
    </location>
    <ligand>
        <name>FMN</name>
        <dbReference type="ChEBI" id="CHEBI:58210"/>
    </ligand>
</feature>
<feature type="binding site" evidence="1">
    <location>
        <position position="180"/>
    </location>
    <ligand>
        <name>FMN</name>
        <dbReference type="ChEBI" id="CHEBI:58210"/>
    </ligand>
</feature>
<feature type="binding site" evidence="1">
    <location>
        <position position="180"/>
    </location>
    <ligand>
        <name>substrate</name>
    </ligand>
</feature>
<feature type="binding site" evidence="1">
    <location>
        <position position="185"/>
    </location>
    <ligand>
        <name>substrate</name>
    </ligand>
</feature>
<feature type="binding site" evidence="1">
    <location>
        <position position="214"/>
    </location>
    <ligand>
        <name>FMN</name>
        <dbReference type="ChEBI" id="CHEBI:58210"/>
    </ligand>
</feature>
<feature type="binding site" evidence="1">
    <location>
        <position position="242"/>
    </location>
    <ligand>
        <name>FMN</name>
        <dbReference type="ChEBI" id="CHEBI:58210"/>
    </ligand>
</feature>
<feature type="binding site" evidence="1">
    <location>
        <begin position="243"/>
        <end position="244"/>
    </location>
    <ligand>
        <name>substrate</name>
    </ligand>
</feature>
<feature type="binding site" evidence="1">
    <location>
        <position position="267"/>
    </location>
    <ligand>
        <name>FMN</name>
        <dbReference type="ChEBI" id="CHEBI:58210"/>
    </ligand>
</feature>
<feature type="binding site" evidence="1">
    <location>
        <position position="296"/>
    </location>
    <ligand>
        <name>FMN</name>
        <dbReference type="ChEBI" id="CHEBI:58210"/>
    </ligand>
</feature>
<feature type="binding site" evidence="1">
    <location>
        <begin position="317"/>
        <end position="318"/>
    </location>
    <ligand>
        <name>FMN</name>
        <dbReference type="ChEBI" id="CHEBI:58210"/>
    </ligand>
</feature>
<sequence length="338" mass="35324">MLFERVVRPTLFRLKGGDAEAAHEFAVRRLAGLARMPAALAVLRARYGVSAPRTVFGLRFPNPVGLAAGMDKDGLALPAWPALGFGFVEVGTVTAHPQPGNPRPRLFRLPDSGAVVNRMGFNNAGAGALAARLAALPRPLGVPLGISLGKSRITPLEEAVEDYQTSYRALREYGDYFAVNVSSPNTPGLRELQDRAHLDALLAALVGEKPILVKIAPDLPEPAIAELLEVCLARGVAGVIATNTTLARDGLAPADQAGGAEAGGLSGRPLADRAREVVAFVHRETDGRLPIVGVGGIVTPDDAGRMFDAGASLVQLYTGFVYRGPALVRAAAAAARTP</sequence>